<name>RPOB_NYMAL</name>
<protein>
    <recommendedName>
        <fullName evidence="1">DNA-directed RNA polymerase subunit beta</fullName>
        <ecNumber evidence="1">2.7.7.6</ecNumber>
    </recommendedName>
    <alternativeName>
        <fullName evidence="1">PEP</fullName>
    </alternativeName>
    <alternativeName>
        <fullName evidence="1">Plastid-encoded RNA polymerase subunit beta</fullName>
        <shortName evidence="1">RNA polymerase subunit beta</shortName>
    </alternativeName>
</protein>
<sequence>MLRDGGDEGMFTIPGFSQIQFEGFCRFIDQGLMEELHQFPKIEDTDQEIEFQLFGESYQLVEPLIKERDAVYESITYSSELYVPAGLIWRTGRNMQEQTVLLGNIPLMNSLGTSIVNGIYRIVINQILQSPGIYYSTGLDHNGISVYTGTIISDWGGRSELEIDRKERIWARVSRKQKISILVLSSAMGSSLREILDNVCYPEIFLSFPNEKEKKKIGSKENAILEFYQKFACVGGDPVFSESLCKELQKKFFQQRCELGRIGRRNMNQRLNLDIPPNNTFLLPRDVLAAADHLIGMKFGMGTLDDMNHLKNKRIRSVADLLQDQFGLALVRLENVVRGTICGAIRHKLIPTPRNLVTSTPLTTTYESFFGLHPLSQVLDRTNPLTQIVHGRKSSYLGPGGLTGRTASFRIRDIHPSHYGRICPIDTSEGINVGLIGSLAIHARVGDWGSIETPFYEISERSKEEQMVYLSPSRDEYYMVAAGNSLALTRGIQEEEVGPARYRQEFLTIAWEQIHLRNIYPFQYFSIGASLIPFIEHNDANRALMSSNMQRQAVPLSQSEKCIVGTGLERQAALDSGGSAIAEREGKIIYTDAEKIVLSGNGDTISIPLVMYQRSNKNTWMHQKPQVHRGKYLKKGQILADGAATVGGELALGKNVSVAYMPWEGYNSEDAVLISERLVYDDIYTSFHIRKYEIQTHVTSQGPERITNEIPHLEPYLLRNLDRNGIVMLGSWVETGDVLVGKLTPQTAKESSYAPEDRLLRAILGIQVSTAKETCLKLPIGGRGRVIDVRWGQKKGGSIYNPEMIRVYISQKRKIKVGDKVAGRHGNKGIISKILPRQDMPYLQDGTPVDMVFNPLGVPSRMNVGQMFECSLGLAGDLLGRHYRITPFDERYEQEASRKLVFSELYEASKQTANPWVFEPEYPGKSRIFDGRTGDPFEQPVIIGKSYMLKLIHQVDDKIHGRSSGHYALVTQQPLRGRAKQGGQRVGEMEVWALEGFGVAHILQEMLTYKSDHIRARQEVLGTTIVGGTIPNPEGAPESFRLLVRELRSLSLELNHFLVSEKNFQINRKEV</sequence>
<dbReference type="EC" id="2.7.7.6" evidence="1"/>
<dbReference type="EMBL" id="AJ627251">
    <property type="protein sequence ID" value="CAF28585.1"/>
    <property type="molecule type" value="Genomic_DNA"/>
</dbReference>
<dbReference type="RefSeq" id="YP_053147.1">
    <property type="nucleotide sequence ID" value="NC_006050.1"/>
</dbReference>
<dbReference type="SMR" id="Q6EW56"/>
<dbReference type="GeneID" id="2896155"/>
<dbReference type="GO" id="GO:0009507">
    <property type="term" value="C:chloroplast"/>
    <property type="evidence" value="ECO:0007669"/>
    <property type="project" value="UniProtKB-SubCell"/>
</dbReference>
<dbReference type="GO" id="GO:0000428">
    <property type="term" value="C:DNA-directed RNA polymerase complex"/>
    <property type="evidence" value="ECO:0007669"/>
    <property type="project" value="UniProtKB-KW"/>
</dbReference>
<dbReference type="GO" id="GO:0005739">
    <property type="term" value="C:mitochondrion"/>
    <property type="evidence" value="ECO:0007669"/>
    <property type="project" value="GOC"/>
</dbReference>
<dbReference type="GO" id="GO:0003677">
    <property type="term" value="F:DNA binding"/>
    <property type="evidence" value="ECO:0007669"/>
    <property type="project" value="UniProtKB-UniRule"/>
</dbReference>
<dbReference type="GO" id="GO:0003899">
    <property type="term" value="F:DNA-directed RNA polymerase activity"/>
    <property type="evidence" value="ECO:0007669"/>
    <property type="project" value="UniProtKB-UniRule"/>
</dbReference>
<dbReference type="GO" id="GO:0032549">
    <property type="term" value="F:ribonucleoside binding"/>
    <property type="evidence" value="ECO:0007669"/>
    <property type="project" value="InterPro"/>
</dbReference>
<dbReference type="GO" id="GO:0006351">
    <property type="term" value="P:DNA-templated transcription"/>
    <property type="evidence" value="ECO:0007669"/>
    <property type="project" value="UniProtKB-UniRule"/>
</dbReference>
<dbReference type="CDD" id="cd00653">
    <property type="entry name" value="RNA_pol_B_RPB2"/>
    <property type="match status" value="1"/>
</dbReference>
<dbReference type="FunFam" id="3.90.1110.10:FF:000009">
    <property type="entry name" value="DNA-directed RNA polymerase subunit beta"/>
    <property type="match status" value="1"/>
</dbReference>
<dbReference type="Gene3D" id="2.40.50.100">
    <property type="match status" value="1"/>
</dbReference>
<dbReference type="Gene3D" id="2.40.50.150">
    <property type="match status" value="1"/>
</dbReference>
<dbReference type="Gene3D" id="3.90.1100.10">
    <property type="match status" value="1"/>
</dbReference>
<dbReference type="Gene3D" id="2.30.150.10">
    <property type="entry name" value="DNA-directed RNA polymerase, beta subunit, external 1 domain"/>
    <property type="match status" value="1"/>
</dbReference>
<dbReference type="Gene3D" id="2.40.270.10">
    <property type="entry name" value="DNA-directed RNA polymerase, subunit 2, domain 6"/>
    <property type="match status" value="1"/>
</dbReference>
<dbReference type="Gene3D" id="3.90.1800.10">
    <property type="entry name" value="RNA polymerase alpha subunit dimerisation domain"/>
    <property type="match status" value="1"/>
</dbReference>
<dbReference type="Gene3D" id="3.90.1110.10">
    <property type="entry name" value="RNA polymerase Rpb2, domain 2"/>
    <property type="match status" value="1"/>
</dbReference>
<dbReference type="HAMAP" id="MF_01321">
    <property type="entry name" value="RNApol_bact_RpoB"/>
    <property type="match status" value="1"/>
</dbReference>
<dbReference type="InterPro" id="IPR042107">
    <property type="entry name" value="DNA-dir_RNA_pol_bsu_ext_1_sf"/>
</dbReference>
<dbReference type="InterPro" id="IPR015712">
    <property type="entry name" value="DNA-dir_RNA_pol_su2"/>
</dbReference>
<dbReference type="InterPro" id="IPR007120">
    <property type="entry name" value="DNA-dir_RNAP_su2_dom"/>
</dbReference>
<dbReference type="InterPro" id="IPR037033">
    <property type="entry name" value="DNA-dir_RNAP_su2_hyb_sf"/>
</dbReference>
<dbReference type="InterPro" id="IPR010243">
    <property type="entry name" value="RNA_pol_bsu_bac"/>
</dbReference>
<dbReference type="InterPro" id="IPR007121">
    <property type="entry name" value="RNA_pol_bsu_CS"/>
</dbReference>
<dbReference type="InterPro" id="IPR007642">
    <property type="entry name" value="RNA_pol_Rpb2_2"/>
</dbReference>
<dbReference type="InterPro" id="IPR037034">
    <property type="entry name" value="RNA_pol_Rpb2_2_sf"/>
</dbReference>
<dbReference type="InterPro" id="IPR007645">
    <property type="entry name" value="RNA_pol_Rpb2_3"/>
</dbReference>
<dbReference type="InterPro" id="IPR007641">
    <property type="entry name" value="RNA_pol_Rpb2_7"/>
</dbReference>
<dbReference type="InterPro" id="IPR014724">
    <property type="entry name" value="RNA_pol_RPB2_OB-fold"/>
</dbReference>
<dbReference type="NCBIfam" id="NF001616">
    <property type="entry name" value="PRK00405.1"/>
    <property type="match status" value="1"/>
</dbReference>
<dbReference type="PANTHER" id="PTHR20856">
    <property type="entry name" value="DNA-DIRECTED RNA POLYMERASE I SUBUNIT 2"/>
    <property type="match status" value="1"/>
</dbReference>
<dbReference type="Pfam" id="PF04561">
    <property type="entry name" value="RNA_pol_Rpb2_2"/>
    <property type="match status" value="1"/>
</dbReference>
<dbReference type="Pfam" id="PF04565">
    <property type="entry name" value="RNA_pol_Rpb2_3"/>
    <property type="match status" value="1"/>
</dbReference>
<dbReference type="Pfam" id="PF00562">
    <property type="entry name" value="RNA_pol_Rpb2_6"/>
    <property type="match status" value="1"/>
</dbReference>
<dbReference type="Pfam" id="PF04560">
    <property type="entry name" value="RNA_pol_Rpb2_7"/>
    <property type="match status" value="1"/>
</dbReference>
<dbReference type="SUPFAM" id="SSF64484">
    <property type="entry name" value="beta and beta-prime subunits of DNA dependent RNA-polymerase"/>
    <property type="match status" value="1"/>
</dbReference>
<dbReference type="PROSITE" id="PS01166">
    <property type="entry name" value="RNA_POL_BETA"/>
    <property type="match status" value="1"/>
</dbReference>
<keyword id="KW-0150">Chloroplast</keyword>
<keyword id="KW-0240">DNA-directed RNA polymerase</keyword>
<keyword id="KW-0548">Nucleotidyltransferase</keyword>
<keyword id="KW-0934">Plastid</keyword>
<keyword id="KW-0804">Transcription</keyword>
<keyword id="KW-0808">Transferase</keyword>
<accession>Q6EW56</accession>
<geneLocation type="chloroplast"/>
<proteinExistence type="inferred from homology"/>
<gene>
    <name evidence="1" type="primary">rpoB</name>
</gene>
<comment type="function">
    <text evidence="1">DNA-dependent RNA polymerase catalyzes the transcription of DNA into RNA using the four ribonucleoside triphosphates as substrates.</text>
</comment>
<comment type="catalytic activity">
    <reaction evidence="1">
        <text>RNA(n) + a ribonucleoside 5'-triphosphate = RNA(n+1) + diphosphate</text>
        <dbReference type="Rhea" id="RHEA:21248"/>
        <dbReference type="Rhea" id="RHEA-COMP:14527"/>
        <dbReference type="Rhea" id="RHEA-COMP:17342"/>
        <dbReference type="ChEBI" id="CHEBI:33019"/>
        <dbReference type="ChEBI" id="CHEBI:61557"/>
        <dbReference type="ChEBI" id="CHEBI:140395"/>
        <dbReference type="EC" id="2.7.7.6"/>
    </reaction>
</comment>
<comment type="subunit">
    <text evidence="1">In plastids the minimal PEP RNA polymerase catalytic core is composed of four subunits: alpha, beta, beta', and beta''. When a (nuclear-encoded) sigma factor is associated with the core the holoenzyme is formed, which can initiate transcription.</text>
</comment>
<comment type="subcellular location">
    <subcellularLocation>
        <location>Plastid</location>
        <location>Chloroplast</location>
    </subcellularLocation>
</comment>
<comment type="similarity">
    <text evidence="1">Belongs to the RNA polymerase beta chain family.</text>
</comment>
<feature type="chain" id="PRO_0000048033" description="DNA-directed RNA polymerase subunit beta">
    <location>
        <begin position="1"/>
        <end position="1071"/>
    </location>
</feature>
<reference key="1">
    <citation type="journal article" date="2004" name="Mol. Biol. Evol.">
        <title>The chloroplast genome of Nymphaea alba: whole-genome analyses and the problem of identifying the most basal angiosperm.</title>
        <authorList>
            <person name="Goremykin V.V."/>
            <person name="Hirsch-Ernst K.I."/>
            <person name="Woelfl S."/>
            <person name="Hellwig F.H."/>
        </authorList>
    </citation>
    <scope>NUCLEOTIDE SEQUENCE [LARGE SCALE GENOMIC DNA]</scope>
</reference>
<organism>
    <name type="scientific">Nymphaea alba</name>
    <name type="common">White water-lily</name>
    <name type="synonym">Castalia alba</name>
    <dbReference type="NCBI Taxonomy" id="34301"/>
    <lineage>
        <taxon>Eukaryota</taxon>
        <taxon>Viridiplantae</taxon>
        <taxon>Streptophyta</taxon>
        <taxon>Embryophyta</taxon>
        <taxon>Tracheophyta</taxon>
        <taxon>Spermatophyta</taxon>
        <taxon>Magnoliopsida</taxon>
        <taxon>Nymphaeales</taxon>
        <taxon>Nymphaeaceae</taxon>
        <taxon>Nymphaea</taxon>
    </lineage>
</organism>
<evidence type="ECO:0000255" key="1">
    <source>
        <dbReference type="HAMAP-Rule" id="MF_01321"/>
    </source>
</evidence>